<accession>Q6Z7K5</accession>
<accession>Q0DX45</accession>
<reference key="1">
    <citation type="journal article" date="2005" name="Nature">
        <title>The map-based sequence of the rice genome.</title>
        <authorList>
            <consortium name="International rice genome sequencing project (IRGSP)"/>
        </authorList>
    </citation>
    <scope>NUCLEOTIDE SEQUENCE [LARGE SCALE GENOMIC DNA]</scope>
    <source>
        <strain>cv. Nipponbare</strain>
    </source>
</reference>
<reference key="2">
    <citation type="journal article" date="2008" name="Nucleic Acids Res.">
        <title>The rice annotation project database (RAP-DB): 2008 update.</title>
        <authorList>
            <consortium name="The rice annotation project (RAP)"/>
        </authorList>
    </citation>
    <scope>GENOME REANNOTATION</scope>
    <source>
        <strain>cv. Nipponbare</strain>
    </source>
</reference>
<reference key="3">
    <citation type="journal article" date="2013" name="Rice">
        <title>Improvement of the Oryza sativa Nipponbare reference genome using next generation sequence and optical map data.</title>
        <authorList>
            <person name="Kawahara Y."/>
            <person name="de la Bastide M."/>
            <person name="Hamilton J.P."/>
            <person name="Kanamori H."/>
            <person name="McCombie W.R."/>
            <person name="Ouyang S."/>
            <person name="Schwartz D.C."/>
            <person name="Tanaka T."/>
            <person name="Wu J."/>
            <person name="Zhou S."/>
            <person name="Childs K.L."/>
            <person name="Davidson R.M."/>
            <person name="Lin H."/>
            <person name="Quesada-Ocampo L."/>
            <person name="Vaillancourt B."/>
            <person name="Sakai H."/>
            <person name="Lee S.S."/>
            <person name="Kim J."/>
            <person name="Numa H."/>
            <person name="Itoh T."/>
            <person name="Buell C.R."/>
            <person name="Matsumoto T."/>
        </authorList>
    </citation>
    <scope>GENOME REANNOTATION</scope>
    <source>
        <strain>cv. Nipponbare</strain>
    </source>
</reference>
<reference key="4">
    <citation type="journal article" date="2005" name="PLoS Biol.">
        <title>The genomes of Oryza sativa: a history of duplications.</title>
        <authorList>
            <person name="Yu J."/>
            <person name="Wang J."/>
            <person name="Lin W."/>
            <person name="Li S."/>
            <person name="Li H."/>
            <person name="Zhou J."/>
            <person name="Ni P."/>
            <person name="Dong W."/>
            <person name="Hu S."/>
            <person name="Zeng C."/>
            <person name="Zhang J."/>
            <person name="Zhang Y."/>
            <person name="Li R."/>
            <person name="Xu Z."/>
            <person name="Li S."/>
            <person name="Li X."/>
            <person name="Zheng H."/>
            <person name="Cong L."/>
            <person name="Lin L."/>
            <person name="Yin J."/>
            <person name="Geng J."/>
            <person name="Li G."/>
            <person name="Shi J."/>
            <person name="Liu J."/>
            <person name="Lv H."/>
            <person name="Li J."/>
            <person name="Wang J."/>
            <person name="Deng Y."/>
            <person name="Ran L."/>
            <person name="Shi X."/>
            <person name="Wang X."/>
            <person name="Wu Q."/>
            <person name="Li C."/>
            <person name="Ren X."/>
            <person name="Wang J."/>
            <person name="Wang X."/>
            <person name="Li D."/>
            <person name="Liu D."/>
            <person name="Zhang X."/>
            <person name="Ji Z."/>
            <person name="Zhao W."/>
            <person name="Sun Y."/>
            <person name="Zhang Z."/>
            <person name="Bao J."/>
            <person name="Han Y."/>
            <person name="Dong L."/>
            <person name="Ji J."/>
            <person name="Chen P."/>
            <person name="Wu S."/>
            <person name="Liu J."/>
            <person name="Xiao Y."/>
            <person name="Bu D."/>
            <person name="Tan J."/>
            <person name="Yang L."/>
            <person name="Ye C."/>
            <person name="Zhang J."/>
            <person name="Xu J."/>
            <person name="Zhou Y."/>
            <person name="Yu Y."/>
            <person name="Zhang B."/>
            <person name="Zhuang S."/>
            <person name="Wei H."/>
            <person name="Liu B."/>
            <person name="Lei M."/>
            <person name="Yu H."/>
            <person name="Li Y."/>
            <person name="Xu H."/>
            <person name="Wei S."/>
            <person name="He X."/>
            <person name="Fang L."/>
            <person name="Zhang Z."/>
            <person name="Zhang Y."/>
            <person name="Huang X."/>
            <person name="Su Z."/>
            <person name="Tong W."/>
            <person name="Li J."/>
            <person name="Tong Z."/>
            <person name="Li S."/>
            <person name="Ye J."/>
            <person name="Wang L."/>
            <person name="Fang L."/>
            <person name="Lei T."/>
            <person name="Chen C.-S."/>
            <person name="Chen H.-C."/>
            <person name="Xu Z."/>
            <person name="Li H."/>
            <person name="Huang H."/>
            <person name="Zhang F."/>
            <person name="Xu H."/>
            <person name="Li N."/>
            <person name="Zhao C."/>
            <person name="Li S."/>
            <person name="Dong L."/>
            <person name="Huang Y."/>
            <person name="Li L."/>
            <person name="Xi Y."/>
            <person name="Qi Q."/>
            <person name="Li W."/>
            <person name="Zhang B."/>
            <person name="Hu W."/>
            <person name="Zhang Y."/>
            <person name="Tian X."/>
            <person name="Jiao Y."/>
            <person name="Liang X."/>
            <person name="Jin J."/>
            <person name="Gao L."/>
            <person name="Zheng W."/>
            <person name="Hao B."/>
            <person name="Liu S.-M."/>
            <person name="Wang W."/>
            <person name="Yuan L."/>
            <person name="Cao M."/>
            <person name="McDermott J."/>
            <person name="Samudrala R."/>
            <person name="Wang J."/>
            <person name="Wong G.K.-S."/>
            <person name="Yang H."/>
        </authorList>
    </citation>
    <scope>NUCLEOTIDE SEQUENCE [LARGE SCALE GENOMIC DNA]</scope>
    <source>
        <strain>cv. Nipponbare</strain>
    </source>
</reference>
<reference key="5">
    <citation type="journal article" date="2003" name="Science">
        <title>Collection, mapping, and annotation of over 28,000 cDNA clones from japonica rice.</title>
        <authorList>
            <consortium name="The rice full-length cDNA consortium"/>
        </authorList>
    </citation>
    <scope>NUCLEOTIDE SEQUENCE [LARGE SCALE MRNA] OF 207-410</scope>
    <source>
        <strain>cv. Nipponbare</strain>
    </source>
</reference>
<keyword id="KW-0406">Ion transport</keyword>
<keyword id="KW-0472">Membrane</keyword>
<keyword id="KW-1185">Reference proteome</keyword>
<keyword id="KW-0812">Transmembrane</keyword>
<keyword id="KW-1133">Transmembrane helix</keyword>
<keyword id="KW-0813">Transport</keyword>
<keyword id="KW-0926">Vacuole</keyword>
<evidence type="ECO:0000250" key="1"/>
<evidence type="ECO:0000255" key="2"/>
<evidence type="ECO:0000256" key="3">
    <source>
        <dbReference type="SAM" id="MobiDB-lite"/>
    </source>
</evidence>
<evidence type="ECO:0000305" key="4"/>
<proteinExistence type="evidence at transcript level"/>
<name>MTP3_ORYSJ</name>
<dbReference type="EMBL" id="AP004853">
    <property type="protein sequence ID" value="BAD17146.1"/>
    <property type="molecule type" value="Genomic_DNA"/>
</dbReference>
<dbReference type="EMBL" id="AP008208">
    <property type="protein sequence ID" value="BAF10193.1"/>
    <property type="status" value="ALT_SEQ"/>
    <property type="molecule type" value="Genomic_DNA"/>
</dbReference>
<dbReference type="EMBL" id="AP014958">
    <property type="status" value="NOT_ANNOTATED_CDS"/>
    <property type="molecule type" value="Genomic_DNA"/>
</dbReference>
<dbReference type="EMBL" id="CM000139">
    <property type="protein sequence ID" value="EAZ24792.1"/>
    <property type="molecule type" value="Genomic_DNA"/>
</dbReference>
<dbReference type="EMBL" id="AK110750">
    <property type="status" value="NOT_ANNOTATED_CDS"/>
    <property type="molecule type" value="mRNA"/>
</dbReference>
<dbReference type="RefSeq" id="XP_015627207.1">
    <property type="nucleotide sequence ID" value="XM_015771721.1"/>
</dbReference>
<dbReference type="SMR" id="Q6Z7K5"/>
<dbReference type="STRING" id="39947.Q6Z7K5"/>
<dbReference type="PaxDb" id="39947-Q6Z7K5"/>
<dbReference type="EnsemblPlants" id="Os02t0775100-01">
    <property type="protein sequence ID" value="Os02t0775100-01"/>
    <property type="gene ID" value="Os02g0775100"/>
</dbReference>
<dbReference type="Gramene" id="Os02t0775100-01">
    <property type="protein sequence ID" value="Os02t0775100-01"/>
    <property type="gene ID" value="Os02g0775100"/>
</dbReference>
<dbReference type="KEGG" id="dosa:Os02g0775100"/>
<dbReference type="eggNOG" id="KOG1485">
    <property type="taxonomic scope" value="Eukaryota"/>
</dbReference>
<dbReference type="InParanoid" id="Q6Z7K5"/>
<dbReference type="OrthoDB" id="78296at2759"/>
<dbReference type="Proteomes" id="UP000000763">
    <property type="component" value="Chromosome 2"/>
</dbReference>
<dbReference type="Proteomes" id="UP000007752">
    <property type="component" value="Chromosome 2"/>
</dbReference>
<dbReference type="Proteomes" id="UP000059680">
    <property type="component" value="Chromosome 2"/>
</dbReference>
<dbReference type="GO" id="GO:0016020">
    <property type="term" value="C:membrane"/>
    <property type="evidence" value="ECO:0000318"/>
    <property type="project" value="GO_Central"/>
</dbReference>
<dbReference type="GO" id="GO:0005774">
    <property type="term" value="C:vacuolar membrane"/>
    <property type="evidence" value="ECO:0007669"/>
    <property type="project" value="UniProtKB-SubCell"/>
</dbReference>
<dbReference type="GO" id="GO:0005384">
    <property type="term" value="F:manganese ion transmembrane transporter activity"/>
    <property type="evidence" value="ECO:0000318"/>
    <property type="project" value="GO_Central"/>
</dbReference>
<dbReference type="FunFam" id="1.20.1510.10:FF:000015">
    <property type="entry name" value="Metal tolerance protein 4"/>
    <property type="match status" value="1"/>
</dbReference>
<dbReference type="FunFam" id="3.30.70.1350:FF:000005">
    <property type="entry name" value="Metal tolerance protein 4"/>
    <property type="match status" value="1"/>
</dbReference>
<dbReference type="Gene3D" id="1.20.1510.10">
    <property type="entry name" value="Cation efflux protein transmembrane domain"/>
    <property type="match status" value="1"/>
</dbReference>
<dbReference type="Gene3D" id="3.30.70.1350">
    <property type="entry name" value="Cation efflux protein, cytoplasmic domain"/>
    <property type="match status" value="1"/>
</dbReference>
<dbReference type="InterPro" id="IPR002524">
    <property type="entry name" value="Cation_efflux"/>
</dbReference>
<dbReference type="InterPro" id="IPR027470">
    <property type="entry name" value="Cation_efflux_CTD"/>
</dbReference>
<dbReference type="InterPro" id="IPR036837">
    <property type="entry name" value="Cation_efflux_CTD_sf"/>
</dbReference>
<dbReference type="InterPro" id="IPR027469">
    <property type="entry name" value="Cation_efflux_TMD_sf"/>
</dbReference>
<dbReference type="InterPro" id="IPR050291">
    <property type="entry name" value="CDF_Transporter"/>
</dbReference>
<dbReference type="NCBIfam" id="TIGR01297">
    <property type="entry name" value="CDF"/>
    <property type="match status" value="1"/>
</dbReference>
<dbReference type="PANTHER" id="PTHR43840:SF23">
    <property type="entry name" value="METAL TOLERANCE PROTEIN 3"/>
    <property type="match status" value="1"/>
</dbReference>
<dbReference type="PANTHER" id="PTHR43840">
    <property type="entry name" value="MITOCHONDRIAL METAL TRANSPORTER 1-RELATED"/>
    <property type="match status" value="1"/>
</dbReference>
<dbReference type="Pfam" id="PF01545">
    <property type="entry name" value="Cation_efflux"/>
    <property type="match status" value="1"/>
</dbReference>
<dbReference type="Pfam" id="PF16916">
    <property type="entry name" value="ZT_dimer"/>
    <property type="match status" value="1"/>
</dbReference>
<dbReference type="SUPFAM" id="SSF160240">
    <property type="entry name" value="Cation efflux protein cytoplasmic domain-like"/>
    <property type="match status" value="1"/>
</dbReference>
<dbReference type="SUPFAM" id="SSF161111">
    <property type="entry name" value="Cation efflux protein transmembrane domain-like"/>
    <property type="match status" value="1"/>
</dbReference>
<sequence>MDGDDRRTPLLGGEGGSTRPPSLRRRDSARSLRSTFLSRLPDKVRGGGDPERPAADVDLTRAKGLSQGEKEYYEKQLATLKIFEEVEALCMPGEFESDAEVLELEDKEQKQSESAMKISNYANIILLVFKVYATIKTGSMAIAASTLDSLLDFLAGGILYFTHLTMKSVNIYKYPIGKLRVQPVGIIVFAAIMATLGFQVLIQAIEQLVENKAGEKMTPEQLIWLYSIMLSATVVKLALYIYCRSSGNSIVQAYAKDHYFDVVTNVVGLVAAVLGDKFFWWIDPVGAVLLAVYTIVNWSGTVYENAVTLVGQCAPSDMLQKLTYLAMKHDPRVRRVDTVRAYSFGALYFVEVDIELSEDMRLGEAHSIGESLQDKIEKLPEVERAFVHVDFESTHKPEHRVRSRLPSTEP</sequence>
<organism>
    <name type="scientific">Oryza sativa subsp. japonica</name>
    <name type="common">Rice</name>
    <dbReference type="NCBI Taxonomy" id="39947"/>
    <lineage>
        <taxon>Eukaryota</taxon>
        <taxon>Viridiplantae</taxon>
        <taxon>Streptophyta</taxon>
        <taxon>Embryophyta</taxon>
        <taxon>Tracheophyta</taxon>
        <taxon>Spermatophyta</taxon>
        <taxon>Magnoliopsida</taxon>
        <taxon>Liliopsida</taxon>
        <taxon>Poales</taxon>
        <taxon>Poaceae</taxon>
        <taxon>BOP clade</taxon>
        <taxon>Oryzoideae</taxon>
        <taxon>Oryzeae</taxon>
        <taxon>Oryzinae</taxon>
        <taxon>Oryza</taxon>
        <taxon>Oryza sativa</taxon>
    </lineage>
</organism>
<gene>
    <name type="primary">MTP3</name>
    <name type="ordered locus">Os02g0775100</name>
    <name type="ordered locus">LOC_Os02g53490</name>
    <name type="ORF">OJ1448_G06.19</name>
    <name type="ORF">OsJ_08570</name>
</gene>
<comment type="function">
    <text evidence="1">Involved in sequestration of excess metal in the cytoplasm into vacuoles to maintain metal homeostasis.</text>
</comment>
<comment type="subcellular location">
    <subcellularLocation>
        <location evidence="1">Vacuole membrane</location>
        <topology evidence="1">Multi-pass membrane protein</topology>
    </subcellularLocation>
    <text>Tonoplast.</text>
</comment>
<comment type="similarity">
    <text evidence="4">Belongs to the cation diffusion facilitator (CDF) transporter (TC 2.A.4) family. SLC30A subfamily.</text>
</comment>
<comment type="sequence caution" evidence="4">
    <conflict type="erroneous gene model prediction">
        <sequence resource="EMBL-CDS" id="BAF10193"/>
    </conflict>
</comment>
<protein>
    <recommendedName>
        <fullName>Metal tolerance protein 3</fullName>
        <shortName>OsMTP3</shortName>
    </recommendedName>
</protein>
<feature type="chain" id="PRO_0000400011" description="Metal tolerance protein 3">
    <location>
        <begin position="1"/>
        <end position="410"/>
    </location>
</feature>
<feature type="topological domain" description="Cytoplasmic" evidence="2">
    <location>
        <begin position="1"/>
        <end position="114"/>
    </location>
</feature>
<feature type="transmembrane region" description="Helical" evidence="2">
    <location>
        <begin position="115"/>
        <end position="135"/>
    </location>
</feature>
<feature type="topological domain" description="Vacuolar" evidence="2">
    <location>
        <begin position="136"/>
        <end position="140"/>
    </location>
</feature>
<feature type="transmembrane region" description="Helical" evidence="2">
    <location>
        <begin position="141"/>
        <end position="161"/>
    </location>
</feature>
<feature type="topological domain" description="Cytoplasmic" evidence="2">
    <location>
        <begin position="162"/>
        <end position="184"/>
    </location>
</feature>
<feature type="transmembrane region" description="Helical" evidence="2">
    <location>
        <begin position="185"/>
        <end position="205"/>
    </location>
</feature>
<feature type="topological domain" description="Vacuolar" evidence="2">
    <location>
        <begin position="206"/>
        <end position="221"/>
    </location>
</feature>
<feature type="transmembrane region" description="Helical" evidence="2">
    <location>
        <begin position="222"/>
        <end position="242"/>
    </location>
</feature>
<feature type="topological domain" description="Cytoplasmic" evidence="2">
    <location>
        <begin position="243"/>
        <end position="258"/>
    </location>
</feature>
<feature type="transmembrane region" description="Helical" evidence="2">
    <location>
        <begin position="259"/>
        <end position="275"/>
    </location>
</feature>
<feature type="topological domain" description="Vacuolar" evidence="2">
    <location>
        <begin position="276"/>
        <end position="284"/>
    </location>
</feature>
<feature type="transmembrane region" description="Helical" evidence="2">
    <location>
        <begin position="285"/>
        <end position="303"/>
    </location>
</feature>
<feature type="topological domain" description="Cytoplasmic" evidence="2">
    <location>
        <begin position="304"/>
        <end position="410"/>
    </location>
</feature>
<feature type="region of interest" description="Disordered" evidence="3">
    <location>
        <begin position="1"/>
        <end position="58"/>
    </location>
</feature>
<feature type="compositionally biased region" description="Basic and acidic residues" evidence="3">
    <location>
        <begin position="40"/>
        <end position="58"/>
    </location>
</feature>